<dbReference type="EMBL" id="AJ250393">
    <property type="protein sequence ID" value="CAB96541.1"/>
    <property type="molecule type" value="mRNA"/>
</dbReference>
<dbReference type="EMBL" id="AF161497">
    <property type="protein sequence ID" value="AAF29112.1"/>
    <property type="molecule type" value="mRNA"/>
</dbReference>
<dbReference type="EMBL" id="AF110775">
    <property type="protein sequence ID" value="AAF14858.1"/>
    <property type="molecule type" value="mRNA"/>
</dbReference>
<dbReference type="EMBL" id="AK314900">
    <property type="protein sequence ID" value="BAG37414.1"/>
    <property type="molecule type" value="mRNA"/>
</dbReference>
<dbReference type="EMBL" id="BC006975">
    <property type="protein sequence ID" value="AAH06975.1"/>
    <property type="status" value="ALT_TERM"/>
    <property type="molecule type" value="mRNA"/>
</dbReference>
<dbReference type="EMBL" id="BC032629">
    <property type="protein sequence ID" value="AAH32629.1"/>
    <property type="status" value="ALT_TERM"/>
    <property type="molecule type" value="mRNA"/>
</dbReference>
<dbReference type="EMBL" id="BC040946">
    <property type="protein sequence ID" value="AAH40946.1"/>
    <property type="molecule type" value="mRNA"/>
</dbReference>
<dbReference type="CCDS" id="CCDS73369.1"/>
<dbReference type="RefSeq" id="NP_001350300.1">
    <property type="nucleotide sequence ID" value="NM_001363371.2"/>
</dbReference>
<dbReference type="RefSeq" id="NP_001350301.1">
    <property type="nucleotide sequence ID" value="NM_001363372.2"/>
</dbReference>
<dbReference type="RefSeq" id="NP_057487.2">
    <property type="nucleotide sequence ID" value="NM_016403.4"/>
</dbReference>
<dbReference type="RefSeq" id="XP_011541170.1">
    <property type="nucleotide sequence ID" value="XM_011542868.2"/>
</dbReference>
<dbReference type="RefSeq" id="XP_016873405.1">
    <property type="nucleotide sequence ID" value="XM_017017916.1"/>
</dbReference>
<dbReference type="PDB" id="5MQF">
    <property type="method" value="EM"/>
    <property type="resolution" value="5.90 A"/>
    <property type="chains" value="R=1-229"/>
</dbReference>
<dbReference type="PDB" id="5XJC">
    <property type="method" value="EM"/>
    <property type="resolution" value="3.60 A"/>
    <property type="chains" value="P=1-229"/>
</dbReference>
<dbReference type="PDB" id="5YZG">
    <property type="method" value="EM"/>
    <property type="resolution" value="4.10 A"/>
    <property type="chains" value="P=1-229"/>
</dbReference>
<dbReference type="PDB" id="5Z56">
    <property type="method" value="EM"/>
    <property type="resolution" value="5.10 A"/>
    <property type="chains" value="P=1-229"/>
</dbReference>
<dbReference type="PDB" id="5Z57">
    <property type="method" value="EM"/>
    <property type="resolution" value="6.50 A"/>
    <property type="chains" value="P=1-229"/>
</dbReference>
<dbReference type="PDB" id="5Z58">
    <property type="method" value="EM"/>
    <property type="resolution" value="4.90 A"/>
    <property type="chains" value="P=1-229"/>
</dbReference>
<dbReference type="PDB" id="6FF4">
    <property type="method" value="EM"/>
    <property type="resolution" value="16.00 A"/>
    <property type="chains" value="R=1-229"/>
</dbReference>
<dbReference type="PDB" id="6FF7">
    <property type="method" value="EM"/>
    <property type="resolution" value="4.50 A"/>
    <property type="chains" value="R=1-229"/>
</dbReference>
<dbReference type="PDB" id="6ICZ">
    <property type="method" value="EM"/>
    <property type="resolution" value="3.00 A"/>
    <property type="chains" value="P=1-229"/>
</dbReference>
<dbReference type="PDB" id="6ID0">
    <property type="method" value="EM"/>
    <property type="resolution" value="2.90 A"/>
    <property type="chains" value="P=1-229"/>
</dbReference>
<dbReference type="PDB" id="6ID1">
    <property type="method" value="EM"/>
    <property type="resolution" value="2.86 A"/>
    <property type="chains" value="P=1-229"/>
</dbReference>
<dbReference type="PDB" id="6QDV">
    <property type="method" value="EM"/>
    <property type="resolution" value="3.30 A"/>
    <property type="chains" value="P=1-229"/>
</dbReference>
<dbReference type="PDB" id="6ZYM">
    <property type="method" value="EM"/>
    <property type="resolution" value="3.40 A"/>
    <property type="chains" value="R=1-229"/>
</dbReference>
<dbReference type="PDB" id="7AAV">
    <property type="method" value="EM"/>
    <property type="resolution" value="4.20 A"/>
    <property type="chains" value="R=1-229"/>
</dbReference>
<dbReference type="PDB" id="7ABF">
    <property type="method" value="EM"/>
    <property type="resolution" value="3.90 A"/>
    <property type="chains" value="R=1-229"/>
</dbReference>
<dbReference type="PDB" id="7ABG">
    <property type="method" value="EM"/>
    <property type="resolution" value="7.80 A"/>
    <property type="chains" value="R=1-229"/>
</dbReference>
<dbReference type="PDB" id="7ABI">
    <property type="method" value="EM"/>
    <property type="resolution" value="8.00 A"/>
    <property type="chains" value="R=1-229"/>
</dbReference>
<dbReference type="PDB" id="7DVQ">
    <property type="method" value="EM"/>
    <property type="resolution" value="2.89 A"/>
    <property type="chains" value="P=1-229"/>
</dbReference>
<dbReference type="PDB" id="7QTT">
    <property type="method" value="EM"/>
    <property type="resolution" value="3.10 A"/>
    <property type="chains" value="Q=1-229"/>
</dbReference>
<dbReference type="PDB" id="7W59">
    <property type="method" value="EM"/>
    <property type="resolution" value="3.60 A"/>
    <property type="chains" value="P=1-229"/>
</dbReference>
<dbReference type="PDB" id="7W5A">
    <property type="method" value="EM"/>
    <property type="resolution" value="3.60 A"/>
    <property type="chains" value="P=1-229"/>
</dbReference>
<dbReference type="PDB" id="7W5B">
    <property type="method" value="EM"/>
    <property type="resolution" value="4.30 A"/>
    <property type="chains" value="P=1-229"/>
</dbReference>
<dbReference type="PDB" id="8C6J">
    <property type="method" value="EM"/>
    <property type="resolution" value="2.80 A"/>
    <property type="chains" value="P=1-229"/>
</dbReference>
<dbReference type="PDB" id="8CH6">
    <property type="method" value="EM"/>
    <property type="resolution" value="5.90 A"/>
    <property type="chains" value="Q=1-229"/>
</dbReference>
<dbReference type="PDB" id="8I0P">
    <property type="method" value="EM"/>
    <property type="resolution" value="3.40 A"/>
    <property type="chains" value="P=1-229"/>
</dbReference>
<dbReference type="PDB" id="8I0R">
    <property type="method" value="EM"/>
    <property type="resolution" value="3.00 A"/>
    <property type="chains" value="P=1-229"/>
</dbReference>
<dbReference type="PDB" id="8I0S">
    <property type="method" value="EM"/>
    <property type="resolution" value="4.20 A"/>
    <property type="chains" value="P=1-229"/>
</dbReference>
<dbReference type="PDB" id="8I0T">
    <property type="method" value="EM"/>
    <property type="resolution" value="3.00 A"/>
    <property type="chains" value="P=1-229"/>
</dbReference>
<dbReference type="PDB" id="8I0U">
    <property type="method" value="EM"/>
    <property type="resolution" value="3.30 A"/>
    <property type="chains" value="P=1-229"/>
</dbReference>
<dbReference type="PDB" id="8I0V">
    <property type="method" value="EM"/>
    <property type="resolution" value="3.00 A"/>
    <property type="chains" value="P=1-229"/>
</dbReference>
<dbReference type="PDB" id="8I0W">
    <property type="method" value="EM"/>
    <property type="resolution" value="3.40 A"/>
    <property type="chains" value="P=1-229"/>
</dbReference>
<dbReference type="PDB" id="8RO2">
    <property type="method" value="EM"/>
    <property type="resolution" value="3.50 A"/>
    <property type="chains" value="P=1-229"/>
</dbReference>
<dbReference type="PDB" id="9FMD">
    <property type="method" value="EM"/>
    <property type="resolution" value="3.30 A"/>
    <property type="chains" value="P=1-229"/>
</dbReference>
<dbReference type="PDBsum" id="5MQF"/>
<dbReference type="PDBsum" id="5XJC"/>
<dbReference type="PDBsum" id="5YZG"/>
<dbReference type="PDBsum" id="5Z56"/>
<dbReference type="PDBsum" id="5Z57"/>
<dbReference type="PDBsum" id="5Z58"/>
<dbReference type="PDBsum" id="6FF4"/>
<dbReference type="PDBsum" id="6FF7"/>
<dbReference type="PDBsum" id="6ICZ"/>
<dbReference type="PDBsum" id="6ID0"/>
<dbReference type="PDBsum" id="6ID1"/>
<dbReference type="PDBsum" id="6QDV"/>
<dbReference type="PDBsum" id="6ZYM"/>
<dbReference type="PDBsum" id="7AAV"/>
<dbReference type="PDBsum" id="7ABF"/>
<dbReference type="PDBsum" id="7ABG"/>
<dbReference type="PDBsum" id="7ABI"/>
<dbReference type="PDBsum" id="7DVQ"/>
<dbReference type="PDBsum" id="7QTT"/>
<dbReference type="PDBsum" id="7W59"/>
<dbReference type="PDBsum" id="7W5A"/>
<dbReference type="PDBsum" id="7W5B"/>
<dbReference type="PDBsum" id="8C6J"/>
<dbReference type="PDBsum" id="8CH6"/>
<dbReference type="PDBsum" id="8I0P"/>
<dbReference type="PDBsum" id="8I0R"/>
<dbReference type="PDBsum" id="8I0S"/>
<dbReference type="PDBsum" id="8I0T"/>
<dbReference type="PDBsum" id="8I0U"/>
<dbReference type="PDBsum" id="8I0V"/>
<dbReference type="PDBsum" id="8I0W"/>
<dbReference type="PDBsum" id="8RO2"/>
<dbReference type="PDBsum" id="9FMD"/>
<dbReference type="EMDB" id="EMD-11569"/>
<dbReference type="EMDB" id="EMD-11693"/>
<dbReference type="EMDB" id="EMD-11694"/>
<dbReference type="EMDB" id="EMD-11695"/>
<dbReference type="EMDB" id="EMD-11697"/>
<dbReference type="EMDB" id="EMD-14146"/>
<dbReference type="EMDB" id="EMD-16452"/>
<dbReference type="EMDB" id="EMD-16658"/>
<dbReference type="EMDB" id="EMD-19399"/>
<dbReference type="EMDB" id="EMD-30875"/>
<dbReference type="EMDB" id="EMD-32317"/>
<dbReference type="EMDB" id="EMD-32319"/>
<dbReference type="EMDB" id="EMD-32321"/>
<dbReference type="EMDB" id="EMD-35105"/>
<dbReference type="EMDB" id="EMD-35107"/>
<dbReference type="EMDB" id="EMD-35108"/>
<dbReference type="EMDB" id="EMD-35109"/>
<dbReference type="EMDB" id="EMD-35110"/>
<dbReference type="EMDB" id="EMD-35111"/>
<dbReference type="EMDB" id="EMD-35113"/>
<dbReference type="EMDB" id="EMD-3545"/>
<dbReference type="EMDB" id="EMD-4255"/>
<dbReference type="EMDB" id="EMD-4525"/>
<dbReference type="EMDB" id="EMD-6721"/>
<dbReference type="EMDB" id="EMD-6864"/>
<dbReference type="EMDB" id="EMD-6889"/>
<dbReference type="EMDB" id="EMD-6890"/>
<dbReference type="EMDB" id="EMD-6891"/>
<dbReference type="EMDB" id="EMD-9645"/>
<dbReference type="EMDB" id="EMD-9646"/>
<dbReference type="EMDB" id="EMD-9647"/>
<dbReference type="SMR" id="Q9P013"/>
<dbReference type="BioGRID" id="119575">
    <property type="interactions" value="141"/>
</dbReference>
<dbReference type="ComplexPortal" id="CPX-5824">
    <property type="entry name" value="PRP19-CDC5L complex"/>
</dbReference>
<dbReference type="CORUM" id="Q9P013"/>
<dbReference type="FunCoup" id="Q9P013">
    <property type="interactions" value="3300"/>
</dbReference>
<dbReference type="IntAct" id="Q9P013">
    <property type="interactions" value="71"/>
</dbReference>
<dbReference type="MINT" id="Q9P013"/>
<dbReference type="STRING" id="9606.ENSP00000475615"/>
<dbReference type="GlyGen" id="Q9P013">
    <property type="glycosylation" value="2 sites, 1 N-linked glycan (1 site), 1 O-linked glycan (1 site)"/>
</dbReference>
<dbReference type="iPTMnet" id="Q9P013"/>
<dbReference type="MetOSite" id="Q9P013"/>
<dbReference type="PhosphoSitePlus" id="Q9P013"/>
<dbReference type="BioMuta" id="CWC15"/>
<dbReference type="DMDM" id="150438891"/>
<dbReference type="jPOST" id="Q9P013"/>
<dbReference type="MassIVE" id="Q9P013"/>
<dbReference type="PaxDb" id="9606-ENSP00000475615"/>
<dbReference type="PeptideAtlas" id="Q9P013"/>
<dbReference type="ProteomicsDB" id="83532"/>
<dbReference type="Pumba" id="Q9P013"/>
<dbReference type="TopDownProteomics" id="Q9P013"/>
<dbReference type="Antibodypedia" id="70625">
    <property type="antibodies" value="77 antibodies from 17 providers"/>
</dbReference>
<dbReference type="DNASU" id="51503"/>
<dbReference type="Ensembl" id="ENST00000279839.8">
    <property type="protein sequence ID" value="ENSP00000475615.2"/>
    <property type="gene ID" value="ENSG00000150316.12"/>
</dbReference>
<dbReference type="GeneID" id="51503"/>
<dbReference type="KEGG" id="hsa:51503"/>
<dbReference type="MANE-Select" id="ENST00000279839.8">
    <property type="protein sequence ID" value="ENSP00000475615.2"/>
    <property type="RefSeq nucleotide sequence ID" value="NM_016403.4"/>
    <property type="RefSeq protein sequence ID" value="NP_057487.2"/>
</dbReference>
<dbReference type="UCSC" id="uc031ybh.1">
    <property type="organism name" value="human"/>
</dbReference>
<dbReference type="AGR" id="HGNC:26939"/>
<dbReference type="CTD" id="51503"/>
<dbReference type="DisGeNET" id="51503"/>
<dbReference type="GeneCards" id="CWC15"/>
<dbReference type="HGNC" id="HGNC:26939">
    <property type="gene designation" value="CWC15"/>
</dbReference>
<dbReference type="HPA" id="ENSG00000150316">
    <property type="expression patterns" value="Low tissue specificity"/>
</dbReference>
<dbReference type="neXtProt" id="NX_Q9P013"/>
<dbReference type="OpenTargets" id="ENSG00000150316"/>
<dbReference type="PharmGKB" id="PA162383026"/>
<dbReference type="VEuPathDB" id="HostDB:ENSG00000150316"/>
<dbReference type="eggNOG" id="KOG3228">
    <property type="taxonomic scope" value="Eukaryota"/>
</dbReference>
<dbReference type="GeneTree" id="ENSGT00390000012084"/>
<dbReference type="HOGENOM" id="CLU_068312_0_1_1"/>
<dbReference type="InParanoid" id="Q9P013"/>
<dbReference type="OMA" id="KYREHGQ"/>
<dbReference type="OrthoDB" id="30179at2759"/>
<dbReference type="PAN-GO" id="Q9P013">
    <property type="GO annotations" value="3 GO annotations based on evolutionary models"/>
</dbReference>
<dbReference type="PhylomeDB" id="Q9P013"/>
<dbReference type="PathwayCommons" id="Q9P013"/>
<dbReference type="Reactome" id="R-HSA-72163">
    <property type="pathway name" value="mRNA Splicing - Major Pathway"/>
</dbReference>
<dbReference type="SignaLink" id="Q9P013"/>
<dbReference type="SIGNOR" id="Q9P013"/>
<dbReference type="BioGRID-ORCS" id="51503">
    <property type="hits" value="45 hits in 307 CRISPR screens"/>
</dbReference>
<dbReference type="ChiTaRS" id="CWC15">
    <property type="organism name" value="human"/>
</dbReference>
<dbReference type="GeneWiki" id="CWC15"/>
<dbReference type="GenomeRNAi" id="51503"/>
<dbReference type="Pharos" id="Q9P013">
    <property type="development level" value="Tbio"/>
</dbReference>
<dbReference type="PRO" id="PR:Q9P013"/>
<dbReference type="Proteomes" id="UP000005640">
    <property type="component" value="Chromosome 11"/>
</dbReference>
<dbReference type="RNAct" id="Q9P013">
    <property type="molecule type" value="protein"/>
</dbReference>
<dbReference type="Bgee" id="ENSG00000150316">
    <property type="expression patterns" value="Expressed in kidney epithelium and 188 other cell types or tissues"/>
</dbReference>
<dbReference type="GO" id="GO:0071013">
    <property type="term" value="C:catalytic step 2 spliceosome"/>
    <property type="evidence" value="ECO:0000314"/>
    <property type="project" value="UniProtKB"/>
</dbReference>
<dbReference type="GO" id="GO:0005739">
    <property type="term" value="C:mitochondrion"/>
    <property type="evidence" value="ECO:0000314"/>
    <property type="project" value="HPA"/>
</dbReference>
<dbReference type="GO" id="GO:0016607">
    <property type="term" value="C:nuclear speck"/>
    <property type="evidence" value="ECO:0000314"/>
    <property type="project" value="HPA"/>
</dbReference>
<dbReference type="GO" id="GO:0005654">
    <property type="term" value="C:nucleoplasm"/>
    <property type="evidence" value="ECO:0000304"/>
    <property type="project" value="Reactome"/>
</dbReference>
<dbReference type="GO" id="GO:0005634">
    <property type="term" value="C:nucleus"/>
    <property type="evidence" value="ECO:0000314"/>
    <property type="project" value="UniProtKB"/>
</dbReference>
<dbReference type="GO" id="GO:0000974">
    <property type="term" value="C:Prp19 complex"/>
    <property type="evidence" value="ECO:0000353"/>
    <property type="project" value="ComplexPortal"/>
</dbReference>
<dbReference type="GO" id="GO:0005681">
    <property type="term" value="C:spliceosomal complex"/>
    <property type="evidence" value="ECO:0000314"/>
    <property type="project" value="UniProtKB"/>
</dbReference>
<dbReference type="GO" id="GO:0071007">
    <property type="term" value="C:U2-type catalytic step 2 spliceosome"/>
    <property type="evidence" value="ECO:0000314"/>
    <property type="project" value="UniProtKB"/>
</dbReference>
<dbReference type="GO" id="GO:0003723">
    <property type="term" value="F:RNA binding"/>
    <property type="evidence" value="ECO:0000250"/>
    <property type="project" value="UniProtKB"/>
</dbReference>
<dbReference type="GO" id="GO:0045292">
    <property type="term" value="P:mRNA cis splicing, via spliceosome"/>
    <property type="evidence" value="ECO:0000318"/>
    <property type="project" value="GO_Central"/>
</dbReference>
<dbReference type="GO" id="GO:0000398">
    <property type="term" value="P:mRNA splicing, via spliceosome"/>
    <property type="evidence" value="ECO:0000314"/>
    <property type="project" value="UniProtKB"/>
</dbReference>
<dbReference type="InterPro" id="IPR006973">
    <property type="entry name" value="Cwf_Cwc_15"/>
</dbReference>
<dbReference type="PANTHER" id="PTHR12718">
    <property type="entry name" value="CELL CYCLE CONTROL PROTEIN CWF15"/>
    <property type="match status" value="1"/>
</dbReference>
<dbReference type="PANTHER" id="PTHR12718:SF2">
    <property type="entry name" value="SPLICEOSOME-ASSOCIATED PROTEIN CWC15 HOMOLOG"/>
    <property type="match status" value="1"/>
</dbReference>
<dbReference type="Pfam" id="PF04889">
    <property type="entry name" value="Cwf_Cwc_15"/>
    <property type="match status" value="1"/>
</dbReference>
<proteinExistence type="evidence at protein level"/>
<sequence length="229" mass="26624">MTTAARPTFEPARGGRGKGEGDLSQLSKQYSSRDLPSHTKIKYRQTTQDAPEEVRNRDFRRELEERERAAAREKNRDRPTREHTTSSSVSKKPRLDQIPAANLDADDPLTDEEDEDFEEESDDDDTAALLAELEKIKKERAEEQARKEQEQKAEEERIRMENILSGNPLLNLTGPSQPQANFKVKRRWDDDVVFKNCAKGVDDQKKDKRFVNDTLRSEFHKKFMEKYIK</sequence>
<accession>Q9P013</accession>
<accession>B2RC17</accession>
<accession>Q05BV9</accession>
<accession>Q05DM1</accession>
<accession>Q9UI29</accession>
<gene>
    <name type="primary">CWC15</name>
    <name type="synonym">C11orf5</name>
    <name type="ORF">AD-002</name>
    <name type="ORF">HSPC148</name>
</gene>
<evidence type="ECO:0000250" key="1">
    <source>
        <dbReference type="UniProtKB" id="Q9JHS9"/>
    </source>
</evidence>
<evidence type="ECO:0000255" key="2"/>
<evidence type="ECO:0000256" key="3">
    <source>
        <dbReference type="SAM" id="MobiDB-lite"/>
    </source>
</evidence>
<evidence type="ECO:0000269" key="4">
    <source>
    </source>
</evidence>
<evidence type="ECO:0000269" key="5">
    <source>
    </source>
</evidence>
<evidence type="ECO:0000269" key="6">
    <source>
    </source>
</evidence>
<evidence type="ECO:0000269" key="7">
    <source>
    </source>
</evidence>
<evidence type="ECO:0000269" key="8">
    <source ref="6"/>
</evidence>
<evidence type="ECO:0000305" key="9"/>
<evidence type="ECO:0000305" key="10">
    <source>
    </source>
</evidence>
<evidence type="ECO:0000305" key="11">
    <source>
    </source>
</evidence>
<evidence type="ECO:0007744" key="12">
    <source>
        <dbReference type="PDB" id="5MQF"/>
    </source>
</evidence>
<evidence type="ECO:0007744" key="13">
    <source>
        <dbReference type="PDB" id="5XJC"/>
    </source>
</evidence>
<evidence type="ECO:0007744" key="14">
    <source>
        <dbReference type="PDB" id="7DVQ"/>
    </source>
</evidence>
<evidence type="ECO:0007744" key="15">
    <source>
    </source>
</evidence>
<evidence type="ECO:0007744" key="16">
    <source>
    </source>
</evidence>
<evidence type="ECO:0007744" key="17">
    <source>
    </source>
</evidence>
<evidence type="ECO:0007744" key="18">
    <source>
    </source>
</evidence>
<evidence type="ECO:0007829" key="19">
    <source>
        <dbReference type="PDB" id="6ID1"/>
    </source>
</evidence>
<evidence type="ECO:0007829" key="20">
    <source>
        <dbReference type="PDB" id="7QTT"/>
    </source>
</evidence>
<feature type="initiator methionine" description="Removed" evidence="8">
    <location>
        <position position="1"/>
    </location>
</feature>
<feature type="chain" id="PRO_0000291543" description="Spliceosome-associated protein CWC15 homolog">
    <location>
        <begin position="2"/>
        <end position="229"/>
    </location>
</feature>
<feature type="region of interest" description="Disordered" evidence="3">
    <location>
        <begin position="1"/>
        <end position="133"/>
    </location>
</feature>
<feature type="coiled-coil region" evidence="2">
    <location>
        <begin position="123"/>
        <end position="165"/>
    </location>
</feature>
<feature type="compositionally biased region" description="Polar residues" evidence="3">
    <location>
        <begin position="24"/>
        <end position="34"/>
    </location>
</feature>
<feature type="compositionally biased region" description="Basic and acidic residues" evidence="3">
    <location>
        <begin position="52"/>
        <end position="84"/>
    </location>
</feature>
<feature type="compositionally biased region" description="Acidic residues" evidence="3">
    <location>
        <begin position="104"/>
        <end position="126"/>
    </location>
</feature>
<feature type="modified residue" description="N-acetylthreonine" evidence="8">
    <location>
        <position position="2"/>
    </location>
</feature>
<feature type="modified residue" description="N6-acetyllysine" evidence="1">
    <location>
        <position position="18"/>
    </location>
</feature>
<feature type="modified residue" description="Phosphothreonine" evidence="17">
    <location>
        <position position="47"/>
    </location>
</feature>
<feature type="modified residue" description="Phosphothreonine" evidence="15 16 18">
    <location>
        <position position="110"/>
    </location>
</feature>
<feature type="modified residue" description="Phosphoserine" evidence="15 18">
    <location>
        <position position="121"/>
    </location>
</feature>
<feature type="sequence conflict" description="In Ref. 2; AAF29112." evidence="9" ref="2">
    <original>E</original>
    <variation>D</variation>
    <location>
        <position position="148"/>
    </location>
</feature>
<feature type="strand" evidence="19">
    <location>
        <begin position="14"/>
        <end position="22"/>
    </location>
</feature>
<feature type="helix" evidence="19">
    <location>
        <begin position="23"/>
        <end position="26"/>
    </location>
</feature>
<feature type="helix" evidence="19">
    <location>
        <begin position="32"/>
        <end position="34"/>
    </location>
</feature>
<feature type="turn" evidence="19">
    <location>
        <begin position="46"/>
        <end position="49"/>
    </location>
</feature>
<feature type="helix" evidence="19">
    <location>
        <begin position="51"/>
        <end position="55"/>
    </location>
</feature>
<feature type="helix" evidence="19">
    <location>
        <begin position="59"/>
        <end position="77"/>
    </location>
</feature>
<feature type="strand" evidence="20">
    <location>
        <begin position="198"/>
        <end position="200"/>
    </location>
</feature>
<feature type="helix" evidence="19">
    <location>
        <begin position="206"/>
        <end position="208"/>
    </location>
</feature>
<feature type="turn" evidence="19">
    <location>
        <begin position="214"/>
        <end position="216"/>
    </location>
</feature>
<feature type="helix" evidence="19">
    <location>
        <begin position="218"/>
        <end position="227"/>
    </location>
</feature>
<reference key="1">
    <citation type="journal article" date="2000" name="Biochem. Biophys. Res. Commun.">
        <title>Characterization of five novel human genes in the 11q13-q22 region.</title>
        <authorList>
            <person name="O'Brien K.P."/>
            <person name="Tapia-Paez I."/>
            <person name="Staahle-Baeckdahl M."/>
            <person name="Kedra D."/>
            <person name="Dumanski J.P."/>
        </authorList>
    </citation>
    <scope>NUCLEOTIDE SEQUENCE [MRNA]</scope>
</reference>
<reference key="2">
    <citation type="journal article" date="2000" name="Genome Res.">
        <title>Cloning and functional analysis of cDNAs with open reading frames for 300 previously undefined genes expressed in CD34+ hematopoietic stem/progenitor cells.</title>
        <authorList>
            <person name="Zhang Q.-H."/>
            <person name="Ye M."/>
            <person name="Wu X.-Y."/>
            <person name="Ren S.-X."/>
            <person name="Zhao M."/>
            <person name="Zhao C.-J."/>
            <person name="Fu G."/>
            <person name="Shen Y."/>
            <person name="Fan H.-Y."/>
            <person name="Lu G."/>
            <person name="Zhong M."/>
            <person name="Xu X.-R."/>
            <person name="Han Z.-G."/>
            <person name="Zhang J.-W."/>
            <person name="Tao J."/>
            <person name="Huang Q.-H."/>
            <person name="Zhou J."/>
            <person name="Hu G.-X."/>
            <person name="Gu J."/>
            <person name="Chen S.-J."/>
            <person name="Chen Z."/>
        </authorList>
    </citation>
    <scope>NUCLEOTIDE SEQUENCE [LARGE SCALE MRNA]</scope>
    <source>
        <tissue>Blood</tissue>
    </source>
</reference>
<reference key="3">
    <citation type="journal article" date="2000" name="Proc. Natl. Acad. Sci. U.S.A.">
        <title>Gene expression profiling in the human hypothalamus-pituitary-adrenal axis and full-length cDNA cloning.</title>
        <authorList>
            <person name="Hu R.-M."/>
            <person name="Han Z.-G."/>
            <person name="Song H.-D."/>
            <person name="Peng Y.-D."/>
            <person name="Huang Q.-H."/>
            <person name="Ren S.-X."/>
            <person name="Gu Y.-J."/>
            <person name="Huang C.-H."/>
            <person name="Li Y.-B."/>
            <person name="Jiang C.-L."/>
            <person name="Fu G."/>
            <person name="Zhang Q.-H."/>
            <person name="Gu B.-W."/>
            <person name="Dai M."/>
            <person name="Mao Y.-F."/>
            <person name="Gao G.-F."/>
            <person name="Rong R."/>
            <person name="Ye M."/>
            <person name="Zhou J."/>
            <person name="Xu S.-H."/>
            <person name="Gu J."/>
            <person name="Shi J.-X."/>
            <person name="Jin W.-R."/>
            <person name="Zhang C.-K."/>
            <person name="Wu T.-M."/>
            <person name="Huang G.-Y."/>
            <person name="Chen Z."/>
            <person name="Chen M.-D."/>
            <person name="Chen J.-L."/>
        </authorList>
    </citation>
    <scope>NUCLEOTIDE SEQUENCE [LARGE SCALE MRNA]</scope>
</reference>
<reference key="4">
    <citation type="journal article" date="2004" name="Nat. Genet.">
        <title>Complete sequencing and characterization of 21,243 full-length human cDNAs.</title>
        <authorList>
            <person name="Ota T."/>
            <person name="Suzuki Y."/>
            <person name="Nishikawa T."/>
            <person name="Otsuki T."/>
            <person name="Sugiyama T."/>
            <person name="Irie R."/>
            <person name="Wakamatsu A."/>
            <person name="Hayashi K."/>
            <person name="Sato H."/>
            <person name="Nagai K."/>
            <person name="Kimura K."/>
            <person name="Makita H."/>
            <person name="Sekine M."/>
            <person name="Obayashi M."/>
            <person name="Nishi T."/>
            <person name="Shibahara T."/>
            <person name="Tanaka T."/>
            <person name="Ishii S."/>
            <person name="Yamamoto J."/>
            <person name="Saito K."/>
            <person name="Kawai Y."/>
            <person name="Isono Y."/>
            <person name="Nakamura Y."/>
            <person name="Nagahari K."/>
            <person name="Murakami K."/>
            <person name="Yasuda T."/>
            <person name="Iwayanagi T."/>
            <person name="Wagatsuma M."/>
            <person name="Shiratori A."/>
            <person name="Sudo H."/>
            <person name="Hosoiri T."/>
            <person name="Kaku Y."/>
            <person name="Kodaira H."/>
            <person name="Kondo H."/>
            <person name="Sugawara M."/>
            <person name="Takahashi M."/>
            <person name="Kanda K."/>
            <person name="Yokoi T."/>
            <person name="Furuya T."/>
            <person name="Kikkawa E."/>
            <person name="Omura Y."/>
            <person name="Abe K."/>
            <person name="Kamihara K."/>
            <person name="Katsuta N."/>
            <person name="Sato K."/>
            <person name="Tanikawa M."/>
            <person name="Yamazaki M."/>
            <person name="Ninomiya K."/>
            <person name="Ishibashi T."/>
            <person name="Yamashita H."/>
            <person name="Murakawa K."/>
            <person name="Fujimori K."/>
            <person name="Tanai H."/>
            <person name="Kimata M."/>
            <person name="Watanabe M."/>
            <person name="Hiraoka S."/>
            <person name="Chiba Y."/>
            <person name="Ishida S."/>
            <person name="Ono Y."/>
            <person name="Takiguchi S."/>
            <person name="Watanabe S."/>
            <person name="Yosida M."/>
            <person name="Hotuta T."/>
            <person name="Kusano J."/>
            <person name="Kanehori K."/>
            <person name="Takahashi-Fujii A."/>
            <person name="Hara H."/>
            <person name="Tanase T.-O."/>
            <person name="Nomura Y."/>
            <person name="Togiya S."/>
            <person name="Komai F."/>
            <person name="Hara R."/>
            <person name="Takeuchi K."/>
            <person name="Arita M."/>
            <person name="Imose N."/>
            <person name="Musashino K."/>
            <person name="Yuuki H."/>
            <person name="Oshima A."/>
            <person name="Sasaki N."/>
            <person name="Aotsuka S."/>
            <person name="Yoshikawa Y."/>
            <person name="Matsunawa H."/>
            <person name="Ichihara T."/>
            <person name="Shiohata N."/>
            <person name="Sano S."/>
            <person name="Moriya S."/>
            <person name="Momiyama H."/>
            <person name="Satoh N."/>
            <person name="Takami S."/>
            <person name="Terashima Y."/>
            <person name="Suzuki O."/>
            <person name="Nakagawa S."/>
            <person name="Senoh A."/>
            <person name="Mizoguchi H."/>
            <person name="Goto Y."/>
            <person name="Shimizu F."/>
            <person name="Wakebe H."/>
            <person name="Hishigaki H."/>
            <person name="Watanabe T."/>
            <person name="Sugiyama A."/>
            <person name="Takemoto M."/>
            <person name="Kawakami B."/>
            <person name="Yamazaki M."/>
            <person name="Watanabe K."/>
            <person name="Kumagai A."/>
            <person name="Itakura S."/>
            <person name="Fukuzumi Y."/>
            <person name="Fujimori Y."/>
            <person name="Komiyama M."/>
            <person name="Tashiro H."/>
            <person name="Tanigami A."/>
            <person name="Fujiwara T."/>
            <person name="Ono T."/>
            <person name="Yamada K."/>
            <person name="Fujii Y."/>
            <person name="Ozaki K."/>
            <person name="Hirao M."/>
            <person name="Ohmori Y."/>
            <person name="Kawabata A."/>
            <person name="Hikiji T."/>
            <person name="Kobatake N."/>
            <person name="Inagaki H."/>
            <person name="Ikema Y."/>
            <person name="Okamoto S."/>
            <person name="Okitani R."/>
            <person name="Kawakami T."/>
            <person name="Noguchi S."/>
            <person name="Itoh T."/>
            <person name="Shigeta K."/>
            <person name="Senba T."/>
            <person name="Matsumura K."/>
            <person name="Nakajima Y."/>
            <person name="Mizuno T."/>
            <person name="Morinaga M."/>
            <person name="Sasaki M."/>
            <person name="Togashi T."/>
            <person name="Oyama M."/>
            <person name="Hata H."/>
            <person name="Watanabe M."/>
            <person name="Komatsu T."/>
            <person name="Mizushima-Sugano J."/>
            <person name="Satoh T."/>
            <person name="Shirai Y."/>
            <person name="Takahashi Y."/>
            <person name="Nakagawa K."/>
            <person name="Okumura K."/>
            <person name="Nagase T."/>
            <person name="Nomura N."/>
            <person name="Kikuchi H."/>
            <person name="Masuho Y."/>
            <person name="Yamashita R."/>
            <person name="Nakai K."/>
            <person name="Yada T."/>
            <person name="Nakamura Y."/>
            <person name="Ohara O."/>
            <person name="Isogai T."/>
            <person name="Sugano S."/>
        </authorList>
    </citation>
    <scope>NUCLEOTIDE SEQUENCE [LARGE SCALE MRNA]</scope>
    <source>
        <tissue>Cerebellum</tissue>
    </source>
</reference>
<reference key="5">
    <citation type="journal article" date="2004" name="Genome Res.">
        <title>The status, quality, and expansion of the NIH full-length cDNA project: the Mammalian Gene Collection (MGC).</title>
        <authorList>
            <consortium name="The MGC Project Team"/>
        </authorList>
    </citation>
    <scope>NUCLEOTIDE SEQUENCE [LARGE SCALE MRNA]</scope>
    <source>
        <tissue>Kidney</tissue>
        <tissue>Liver</tissue>
        <tissue>Testis</tissue>
    </source>
</reference>
<reference key="6">
    <citation type="submission" date="2008-12" db="UniProtKB">
        <authorList>
            <person name="Bienvenut W.V."/>
            <person name="Lilla S."/>
            <person name="von Kriegsheim A."/>
            <person name="Lempens A."/>
            <person name="Kolch W."/>
        </authorList>
    </citation>
    <scope>PROTEIN SEQUENCE OF 2-13; 17-28; 45-55; 188-195 AND 210-216</scope>
    <scope>CLEAVAGE OF INITIATOR METHIONINE</scope>
    <scope>ACETYLATION AT THR-2</scope>
    <scope>IDENTIFICATION BY MASS SPECTROMETRY</scope>
    <source>
        <tissue>Ovarian carcinoma</tissue>
    </source>
</reference>
<reference key="7">
    <citation type="journal article" date="2006" name="Cell">
        <title>Global, in vivo, and site-specific phosphorylation dynamics in signaling networks.</title>
        <authorList>
            <person name="Olsen J.V."/>
            <person name="Blagoev B."/>
            <person name="Gnad F."/>
            <person name="Macek B."/>
            <person name="Kumar C."/>
            <person name="Mortensen P."/>
            <person name="Mann M."/>
        </authorList>
    </citation>
    <scope>PHOSPHORYLATION [LARGE SCALE ANALYSIS] AT THR-110 AND SER-121</scope>
    <scope>IDENTIFICATION BY MASS SPECTROMETRY [LARGE SCALE ANALYSIS]</scope>
    <source>
        <tissue>Cervix carcinoma</tissue>
    </source>
</reference>
<reference key="8">
    <citation type="journal article" date="2008" name="Proc. Natl. Acad. Sci. U.S.A.">
        <title>A quantitative atlas of mitotic phosphorylation.</title>
        <authorList>
            <person name="Dephoure N."/>
            <person name="Zhou C."/>
            <person name="Villen J."/>
            <person name="Beausoleil S.A."/>
            <person name="Bakalarski C.E."/>
            <person name="Elledge S.J."/>
            <person name="Gygi S.P."/>
        </authorList>
    </citation>
    <scope>PHOSPHORYLATION [LARGE SCALE ANALYSIS] AT THR-110</scope>
    <scope>IDENTIFICATION BY MASS SPECTROMETRY [LARGE SCALE ANALYSIS]</scope>
    <source>
        <tissue>Cervix carcinoma</tissue>
    </source>
</reference>
<reference key="9">
    <citation type="journal article" date="2010" name="Mol. Cell. Biol.">
        <title>Molecular architecture of the human Prp19/CDC5L complex.</title>
        <authorList>
            <person name="Grote M."/>
            <person name="Wolf E."/>
            <person name="Will C.L."/>
            <person name="Lemm I."/>
            <person name="Agafonov D.E."/>
            <person name="Schomburg A."/>
            <person name="Fischle W."/>
            <person name="Urlaub H."/>
            <person name="Luhrmann R."/>
        </authorList>
    </citation>
    <scope>IDENTIFICATION AS A COMPONENT OF THE PRP19-CDC5L COMPLEX</scope>
    <scope>SUBCELLULAR LOCATION</scope>
    <scope>INTERACTION WITH CTNNBL1</scope>
    <scope>FUNCTION</scope>
</reference>
<reference key="10">
    <citation type="journal article" date="2011" name="BMC Syst. Biol.">
        <title>Initial characterization of the human central proteome.</title>
        <authorList>
            <person name="Burkard T.R."/>
            <person name="Planyavsky M."/>
            <person name="Kaupe I."/>
            <person name="Breitwieser F.P."/>
            <person name="Buerckstuemmer T."/>
            <person name="Bennett K.L."/>
            <person name="Superti-Furga G."/>
            <person name="Colinge J."/>
        </authorList>
    </citation>
    <scope>IDENTIFICATION BY MASS SPECTROMETRY [LARGE SCALE ANALYSIS]</scope>
</reference>
<reference key="11">
    <citation type="journal article" date="2011" name="Sci. Signal.">
        <title>System-wide temporal characterization of the proteome and phosphoproteome of human embryonic stem cell differentiation.</title>
        <authorList>
            <person name="Rigbolt K.T."/>
            <person name="Prokhorova T.A."/>
            <person name="Akimov V."/>
            <person name="Henningsen J."/>
            <person name="Johansen P.T."/>
            <person name="Kratchmarova I."/>
            <person name="Kassem M."/>
            <person name="Mann M."/>
            <person name="Olsen J.V."/>
            <person name="Blagoev B."/>
        </authorList>
    </citation>
    <scope>IDENTIFICATION BY MASS SPECTROMETRY [LARGE SCALE ANALYSIS]</scope>
</reference>
<reference key="12">
    <citation type="journal article" date="2013" name="J. Proteome Res.">
        <title>Toward a comprehensive characterization of a human cancer cell phosphoproteome.</title>
        <authorList>
            <person name="Zhou H."/>
            <person name="Di Palma S."/>
            <person name="Preisinger C."/>
            <person name="Peng M."/>
            <person name="Polat A.N."/>
            <person name="Heck A.J."/>
            <person name="Mohammed S."/>
        </authorList>
    </citation>
    <scope>PHOSPHORYLATION [LARGE SCALE ANALYSIS] AT THR-47</scope>
    <scope>IDENTIFICATION BY MASS SPECTROMETRY [LARGE SCALE ANALYSIS]</scope>
    <source>
        <tissue>Erythroleukemia</tissue>
    </source>
</reference>
<reference key="13">
    <citation type="journal article" date="2014" name="J. Proteomics">
        <title>An enzyme assisted RP-RPLC approach for in-depth analysis of human liver phosphoproteome.</title>
        <authorList>
            <person name="Bian Y."/>
            <person name="Song C."/>
            <person name="Cheng K."/>
            <person name="Dong M."/>
            <person name="Wang F."/>
            <person name="Huang J."/>
            <person name="Sun D."/>
            <person name="Wang L."/>
            <person name="Ye M."/>
            <person name="Zou H."/>
        </authorList>
    </citation>
    <scope>PHOSPHORYLATION [LARGE SCALE ANALYSIS] AT THR-110 AND SER-121</scope>
    <scope>IDENTIFICATION BY MASS SPECTROMETRY [LARGE SCALE ANALYSIS]</scope>
    <source>
        <tissue>Liver</tissue>
    </source>
</reference>
<reference evidence="13" key="14">
    <citation type="journal article" date="2017" name="Cell">
        <title>An Atomic Structure of the Human Spliceosome.</title>
        <authorList>
            <person name="Zhang X."/>
            <person name="Yan C."/>
            <person name="Hang J."/>
            <person name="Finci L.I."/>
            <person name="Lei J."/>
            <person name="Shi Y."/>
        </authorList>
    </citation>
    <scope>STRUCTURE BY ELECTRON MICROSCOPY (3.60 ANGSTROMS)</scope>
    <scope>FUNCTION</scope>
    <scope>SUBUNIT</scope>
    <scope>SUBCELLULAR LOCATION</scope>
</reference>
<reference evidence="12" key="15">
    <citation type="journal article" date="2017" name="Nature">
        <title>Cryo-EM structure of a human spliceosome activated for step 2 of splicing.</title>
        <authorList>
            <person name="Bertram K."/>
            <person name="Agafonov D.E."/>
            <person name="Liu W.T."/>
            <person name="Dybkov O."/>
            <person name="Will C.L."/>
            <person name="Hartmuth K."/>
            <person name="Urlaub H."/>
            <person name="Kastner B."/>
            <person name="Stark H."/>
            <person name="Luhrmann R."/>
        </authorList>
    </citation>
    <scope>STRUCTURE BY ELECTRON MICROSCOPY (5.90 ANGSTROMS)</scope>
    <scope>FUNCTION</scope>
    <scope>SUBUNIT</scope>
    <scope>SUBCELLULAR LOCATION</scope>
    <scope>IDENTIFICATION BY MASS SPECTROMETRY</scope>
</reference>
<reference evidence="14" key="16">
    <citation type="journal article" date="2021" name="Science">
        <title>Structure of the activated human minor spliceosome.</title>
        <authorList>
            <person name="Bai R."/>
            <person name="Wan R."/>
            <person name="Wang L."/>
            <person name="Xu K."/>
            <person name="Zhang Q."/>
            <person name="Lei J."/>
            <person name="Shi Y."/>
        </authorList>
    </citation>
    <scope>STRUCTURE BY ELECTRON MICROSCOPY (2.89 ANGSTROMS)</scope>
    <scope>SUBUNIT</scope>
</reference>
<keyword id="KW-0002">3D-structure</keyword>
<keyword id="KW-0007">Acetylation</keyword>
<keyword id="KW-0175">Coiled coil</keyword>
<keyword id="KW-0903">Direct protein sequencing</keyword>
<keyword id="KW-0507">mRNA processing</keyword>
<keyword id="KW-0508">mRNA splicing</keyword>
<keyword id="KW-0539">Nucleus</keyword>
<keyword id="KW-0597">Phosphoprotein</keyword>
<keyword id="KW-1267">Proteomics identification</keyword>
<keyword id="KW-1185">Reference proteome</keyword>
<keyword id="KW-0747">Spliceosome</keyword>
<protein>
    <recommendedName>
        <fullName>Spliceosome-associated protein CWC15 homolog</fullName>
    </recommendedName>
</protein>
<comment type="function">
    <text evidence="4 5 6 11">Involved in pre-mRNA splicing as component of the spliceosome (PubMed:28076346, PubMed:28502770). Component of the PRP19-CDC5L complex that forms an integral part of the spliceosome and is required for activating pre-mRNA splicing. As a component of the minor spliceosome, involved in the splicing of U12-type introns in pre-mRNAs (Probable).</text>
</comment>
<comment type="subunit">
    <text evidence="4 5 6 7">Identified in the spliceosome C complex (PubMed:28076346, PubMed:28502770). Component of the PRP19-CDC5L splicing complex composed of a core complex comprising a homotetramer of PRPF19, CDC5L, PLRG1 and BCAS2, and at least three less stably associated proteins CTNNBL1, CWC15 and HSPA8 (PubMed:20176811). Interacts directly with CTNNBL1 in the complex (PubMed:20176811). Component of the minor spliceosome, which splices U12-type introns (PubMed:33509932).</text>
</comment>
<comment type="interaction">
    <interactant intactId="EBI-2371709">
        <id>Q9P013</id>
    </interactant>
    <interactant intactId="EBI-748128">
        <id>Q8WYA6</id>
        <label>CTNNBL1</label>
    </interactant>
    <organismsDiffer>false</organismsDiffer>
    <experiments>9</experiments>
</comment>
<comment type="subcellular location">
    <subcellularLocation>
        <location evidence="4 5 6">Nucleus</location>
    </subcellularLocation>
</comment>
<comment type="similarity">
    <text evidence="9">Belongs to the CWC15 family.</text>
</comment>
<comment type="caution">
    <text evidence="10">Has been termed C11orf5, but is not the official C11orf5 as defined by HGNC.</text>
</comment>
<name>CWC15_HUMAN</name>
<organism>
    <name type="scientific">Homo sapiens</name>
    <name type="common">Human</name>
    <dbReference type="NCBI Taxonomy" id="9606"/>
    <lineage>
        <taxon>Eukaryota</taxon>
        <taxon>Metazoa</taxon>
        <taxon>Chordata</taxon>
        <taxon>Craniata</taxon>
        <taxon>Vertebrata</taxon>
        <taxon>Euteleostomi</taxon>
        <taxon>Mammalia</taxon>
        <taxon>Eutheria</taxon>
        <taxon>Euarchontoglires</taxon>
        <taxon>Primates</taxon>
        <taxon>Haplorrhini</taxon>
        <taxon>Catarrhini</taxon>
        <taxon>Hominidae</taxon>
        <taxon>Homo</taxon>
    </lineage>
</organism>